<keyword id="KW-0472">Membrane</keyword>
<keyword id="KW-1267">Proteomics identification</keyword>
<keyword id="KW-1185">Reference proteome</keyword>
<keyword id="KW-0812">Transmembrane</keyword>
<keyword id="KW-1133">Transmembrane helix</keyword>
<sequence>MNIEVGNISYTGAIISWSSSEPCLEDYYHIMYRPNWNSIFSGYLRYSFHHEEKVPRTISSVVLEHLAPSTLYFLCISCKKAAFPYRHYCTMFHTLDKSPLAPGSSLVDPQISLWVLMAILLACFTAVLAFICLQFWCVRCHEPRWSYRAGHMEEANGLVRWPEEAPDLGQREEDLQGLPLVEMPRKNSRDGAELDPEANQDAPDAGALQRGGGDPPAILPHCGE</sequence>
<evidence type="ECO:0000255" key="1"/>
<evidence type="ECO:0000255" key="2">
    <source>
        <dbReference type="PROSITE-ProRule" id="PRU00316"/>
    </source>
</evidence>
<evidence type="ECO:0000256" key="3">
    <source>
        <dbReference type="SAM" id="MobiDB-lite"/>
    </source>
</evidence>
<evidence type="ECO:0000269" key="4">
    <source>
    </source>
</evidence>
<evidence type="ECO:0000305" key="5"/>
<feature type="chain" id="PRO_0000299409" description="Fibronectin type III domain-containing protein 9">
    <location>
        <begin position="1"/>
        <end position="224"/>
    </location>
</feature>
<feature type="transmembrane region" description="Helical" evidence="1">
    <location>
        <begin position="113"/>
        <end position="133"/>
    </location>
</feature>
<feature type="domain" description="Fibronectin type-III" evidence="2">
    <location>
        <begin position="1"/>
        <end position="101"/>
    </location>
</feature>
<feature type="region of interest" description="Disordered" evidence="3">
    <location>
        <begin position="175"/>
        <end position="224"/>
    </location>
</feature>
<feature type="compositionally biased region" description="Basic and acidic residues" evidence="3">
    <location>
        <begin position="183"/>
        <end position="192"/>
    </location>
</feature>
<feature type="sequence variant" id="VAR_047138" description="In dbSNP:rs17852104." evidence="4">
    <original>H</original>
    <variation>N</variation>
    <location>
        <position position="50"/>
    </location>
</feature>
<feature type="sequence variant" id="VAR_047139" description="In dbSNP:rs10037485.">
    <original>V</original>
    <variation>I</variation>
    <location>
        <position position="138"/>
    </location>
</feature>
<feature type="sequence variant" id="VAR_047140" description="In dbSNP:rs17054522.">
    <original>P</original>
    <variation>A</variation>
    <location>
        <position position="166"/>
    </location>
</feature>
<proteinExistence type="evidence at protein level"/>
<protein>
    <recommendedName>
        <fullName>Fibronectin type III domain-containing protein 9</fullName>
    </recommendedName>
</protein>
<comment type="interaction">
    <interactant intactId="EBI-12142257">
        <id>Q8TBE3</id>
    </interactant>
    <interactant intactId="EBI-10827839">
        <id>Q15848</id>
        <label>ADIPOQ</label>
    </interactant>
    <organismsDiffer>false</organismsDiffer>
    <experiments>3</experiments>
</comment>
<comment type="interaction">
    <interactant intactId="EBI-12142257">
        <id>Q8TBE3</id>
    </interactant>
    <interactant intactId="EBI-11522760">
        <id>Q6RW13-2</id>
        <label>AGTRAP</label>
    </interactant>
    <organismsDiffer>false</organismsDiffer>
    <experiments>3</experiments>
</comment>
<comment type="interaction">
    <interactant intactId="EBI-12142257">
        <id>Q8TBE3</id>
    </interactant>
    <interactant intactId="EBI-11957045">
        <id>Q9NVV5-2</id>
        <label>AIG1</label>
    </interactant>
    <organismsDiffer>false</organismsDiffer>
    <experiments>3</experiments>
</comment>
<comment type="interaction">
    <interactant intactId="EBI-12142257">
        <id>Q8TBE3</id>
    </interactant>
    <interactant intactId="EBI-3921628">
        <id>Q16853</id>
        <label>AOC3</label>
    </interactant>
    <organismsDiffer>false</organismsDiffer>
    <experiments>3</experiments>
</comment>
<comment type="interaction">
    <interactant intactId="EBI-12142257">
        <id>Q8TBE3</id>
    </interactant>
    <interactant intactId="EBI-745213">
        <id>P29972</id>
        <label>AQP1</label>
    </interactant>
    <organismsDiffer>false</organismsDiffer>
    <experiments>3</experiments>
</comment>
<comment type="interaction">
    <interactant intactId="EBI-12142257">
        <id>Q8TBE3</id>
    </interactant>
    <interactant intactId="EBI-1172335">
        <id>P07306</id>
        <label>ASGR1</label>
    </interactant>
    <organismsDiffer>false</organismsDiffer>
    <experiments>3</experiments>
</comment>
<comment type="interaction">
    <interactant intactId="EBI-12142257">
        <id>Q8TBE3</id>
    </interactant>
    <interactant intactId="EBI-721179">
        <id>P27449</id>
        <label>ATP6V0C</label>
    </interactant>
    <organismsDiffer>false</organismsDiffer>
    <experiments>3</experiments>
</comment>
<comment type="interaction">
    <interactant intactId="EBI-12142257">
        <id>Q8TBE3</id>
    </interactant>
    <interactant intactId="EBI-930964">
        <id>P54253</id>
        <label>ATXN1</label>
    </interactant>
    <organismsDiffer>false</organismsDiffer>
    <experiments>3</experiments>
</comment>
<comment type="interaction">
    <interactant intactId="EBI-12142257">
        <id>Q8TBE3</id>
    </interactant>
    <interactant intactId="EBI-3922513">
        <id>O95393</id>
        <label>BMP10</label>
    </interactant>
    <organismsDiffer>false</organismsDiffer>
    <experiments>3</experiments>
</comment>
<comment type="interaction">
    <interactant intactId="EBI-12142257">
        <id>Q8TBE3</id>
    </interactant>
    <interactant intactId="EBI-12062109">
        <id>Q86Z23</id>
        <label>C1QL4</label>
    </interactant>
    <organismsDiffer>false</organismsDiffer>
    <experiments>3</experiments>
</comment>
<comment type="interaction">
    <interactant intactId="EBI-12142257">
        <id>Q8TBE3</id>
    </interactant>
    <interactant intactId="EBI-9686780">
        <id>Q06432</id>
        <label>CACNG1</label>
    </interactant>
    <organismsDiffer>false</organismsDiffer>
    <experiments>3</experiments>
</comment>
<comment type="interaction">
    <interactant intactId="EBI-12142257">
        <id>Q8TBE3</id>
    </interactant>
    <interactant intactId="EBI-14259393">
        <id>Q8IX05</id>
        <label>CD302</label>
    </interactant>
    <organismsDiffer>false</organismsDiffer>
    <experiments>3</experiments>
</comment>
<comment type="interaction">
    <interactant intactId="EBI-12142257">
        <id>Q8TBE3</id>
    </interactant>
    <interactant intactId="EBI-723889">
        <id>O95832</id>
        <label>CLDN1</label>
    </interactant>
    <organismsDiffer>false</organismsDiffer>
    <experiments>3</experiments>
</comment>
<comment type="interaction">
    <interactant intactId="EBI-12142257">
        <id>Q8TBE3</id>
    </interactant>
    <interactant intactId="EBI-12820543">
        <id>O75508</id>
        <label>CLDN11</label>
    </interactant>
    <organismsDiffer>false</organismsDiffer>
    <experiments>3</experiments>
</comment>
<comment type="interaction">
    <interactant intactId="EBI-12142257">
        <id>Q8TBE3</id>
    </interactant>
    <interactant intactId="EBI-12256978">
        <id>Q8N6F1-2</id>
        <label>CLDN19</label>
    </interactant>
    <organismsDiffer>false</organismsDiffer>
    <experiments>3</experiments>
</comment>
<comment type="interaction">
    <interactant intactId="EBI-12142257">
        <id>Q8TBE3</id>
    </interactant>
    <interactant intactId="EBI-11996768">
        <id>Q8NC01</id>
        <label>CLEC1A</label>
    </interactant>
    <organismsDiffer>false</organismsDiffer>
    <experiments>3</experiments>
</comment>
<comment type="interaction">
    <interactant intactId="EBI-12142257">
        <id>Q8TBE3</id>
    </interactant>
    <interactant intactId="EBI-11749983">
        <id>Q9UHP7-3</id>
        <label>CLEC2D</label>
    </interactant>
    <organismsDiffer>false</organismsDiffer>
    <experiments>3</experiments>
</comment>
<comment type="interaction">
    <interactant intactId="EBI-12142257">
        <id>Q8TBE3</id>
    </interactant>
    <interactant intactId="EBI-11989440">
        <id>Q9BXN2-6</id>
        <label>CLEC7A</label>
    </interactant>
    <organismsDiffer>false</organismsDiffer>
    <experiments>3</experiments>
</comment>
<comment type="interaction">
    <interactant intactId="EBI-12142257">
        <id>Q8TBE3</id>
    </interactant>
    <interactant intactId="EBI-6165897">
        <id>Q9NWW5</id>
        <label>CLN6</label>
    </interactant>
    <organismsDiffer>false</organismsDiffer>
    <experiments>3</experiments>
</comment>
<comment type="interaction">
    <interactant intactId="EBI-12142257">
        <id>Q8TBE3</id>
    </interactant>
    <interactant intactId="EBI-12813623">
        <id>A0PK11</id>
        <label>CLRN2</label>
    </interactant>
    <organismsDiffer>false</organismsDiffer>
    <experiments>3</experiments>
</comment>
<comment type="interaction">
    <interactant intactId="EBI-12142257">
        <id>Q8TBE3</id>
    </interactant>
    <interactant intactId="EBI-11522780">
        <id>Q96DZ9-2</id>
        <label>CMTM5</label>
    </interactant>
    <organismsDiffer>false</organismsDiffer>
    <experiments>3</experiments>
</comment>
<comment type="interaction">
    <interactant intactId="EBI-12142257">
        <id>Q8TBE3</id>
    </interactant>
    <interactant intactId="EBI-12208021">
        <id>Q8TBE1</id>
        <label>CNIH3</label>
    </interactant>
    <organismsDiffer>false</organismsDiffer>
    <experiments>3</experiments>
</comment>
<comment type="interaction">
    <interactant intactId="EBI-12142257">
        <id>Q8TBE3</id>
    </interactant>
    <interactant intactId="EBI-10241815">
        <id>Q4VAQ0</id>
        <label>COL8A2</label>
    </interactant>
    <organismsDiffer>false</organismsDiffer>
    <experiments>3</experiments>
</comment>
<comment type="interaction">
    <interactant intactId="EBI-12142257">
        <id>Q8TBE3</id>
    </interactant>
    <interactant intactId="EBI-3911467">
        <id>Q07325</id>
        <label>CXCL9</label>
    </interactant>
    <organismsDiffer>false</organismsDiffer>
    <experiments>3</experiments>
</comment>
<comment type="interaction">
    <interactant intactId="EBI-12142257">
        <id>Q8TBE3</id>
    </interactant>
    <interactant intactId="EBI-1058710">
        <id>O43169</id>
        <label>CYB5B</label>
    </interactant>
    <organismsDiffer>false</organismsDiffer>
    <experiments>3</experiments>
</comment>
<comment type="interaction">
    <interactant intactId="EBI-12142257">
        <id>Q8TBE3</id>
    </interactant>
    <interactant intactId="EBI-17250048">
        <id>Q7Z7B7</id>
        <label>DEFB132</label>
    </interactant>
    <organismsDiffer>false</organismsDiffer>
    <experiments>3</experiments>
</comment>
<comment type="interaction">
    <interactant intactId="EBI-12142257">
        <id>Q8TBE3</id>
    </interactant>
    <interactant intactId="EBI-8645574">
        <id>Q9UPQ8</id>
        <label>DOLK</label>
    </interactant>
    <organismsDiffer>false</organismsDiffer>
    <experiments>3</experiments>
</comment>
<comment type="interaction">
    <interactant intactId="EBI-12142257">
        <id>Q8TBE3</id>
    </interactant>
    <interactant intactId="EBI-10215665">
        <id>P56851</id>
        <label>EDDM3B</label>
    </interactant>
    <organismsDiffer>false</organismsDiffer>
    <experiments>3</experiments>
</comment>
<comment type="interaction">
    <interactant intactId="EBI-12142257">
        <id>Q8TBE3</id>
    </interactant>
    <interactant intactId="EBI-3907816">
        <id>P54852</id>
        <label>EMP3</label>
    </interactant>
    <organismsDiffer>false</organismsDiffer>
    <experiments>3</experiments>
</comment>
<comment type="interaction">
    <interactant intactId="EBI-12142257">
        <id>Q8TBE3</id>
    </interactant>
    <interactant intactId="EBI-12279764">
        <id>O75355-2</id>
        <label>ENTPD3</label>
    </interactant>
    <organismsDiffer>false</organismsDiffer>
    <experiments>3</experiments>
</comment>
<comment type="interaction">
    <interactant intactId="EBI-12142257">
        <id>Q8TBE3</id>
    </interactant>
    <interactant intactId="EBI-10976398">
        <id>Q7Z2K6</id>
        <label>ERMP1</label>
    </interactant>
    <organismsDiffer>false</organismsDiffer>
    <experiments>3</experiments>
</comment>
<comment type="interaction">
    <interactant intactId="EBI-12142257">
        <id>Q8TBE3</id>
    </interactant>
    <interactant intactId="EBI-1760167">
        <id>Q92935</id>
        <label>EXTL1</label>
    </interactant>
    <organismsDiffer>false</organismsDiffer>
    <experiments>3</experiments>
</comment>
<comment type="interaction">
    <interactant intactId="EBI-12142257">
        <id>Q8TBE3</id>
    </interactant>
    <interactant intactId="EBI-2876774">
        <id>Q92520</id>
        <label>FAM3C</label>
    </interactant>
    <organismsDiffer>false</organismsDiffer>
    <experiments>3</experiments>
</comment>
<comment type="interaction">
    <interactant intactId="EBI-12142257">
        <id>Q8TBE3</id>
    </interactant>
    <interactant intactId="EBI-3925203">
        <id>Q8N3T1</id>
        <label>GALNT15</label>
    </interactant>
    <organismsDiffer>false</organismsDiffer>
    <experiments>3</experiments>
</comment>
<comment type="interaction">
    <interactant intactId="EBI-12142257">
        <id>Q8TBE3</id>
    </interactant>
    <interactant intactId="EBI-17248158">
        <id>Q8N0V5-3</id>
        <label>GCNT2</label>
    </interactant>
    <organismsDiffer>false</organismsDiffer>
    <experiments>3</experiments>
</comment>
<comment type="interaction">
    <interactant intactId="EBI-12142257">
        <id>Q8TBE3</id>
    </interactant>
    <interactant intactId="EBI-5916693">
        <id>Q9HCP6</id>
        <label>HHATL</label>
    </interactant>
    <organismsDiffer>false</organismsDiffer>
    <experiments>3</experiments>
</comment>
<comment type="interaction">
    <interactant intactId="EBI-12142257">
        <id>Q8TBE3</id>
    </interactant>
    <interactant intactId="EBI-720480">
        <id>P24593</id>
        <label>IGFBP5</label>
    </interactant>
    <organismsDiffer>false</organismsDiffer>
    <experiments>3</experiments>
</comment>
<comment type="interaction">
    <interactant intactId="EBI-12142257">
        <id>Q8TBE3</id>
    </interactant>
    <interactant intactId="EBI-2431769">
        <id>O43736</id>
        <label>ITM2A</label>
    </interactant>
    <organismsDiffer>false</organismsDiffer>
    <experiments>3</experiments>
</comment>
<comment type="interaction">
    <interactant intactId="EBI-12142257">
        <id>Q8TBE3</id>
    </interactant>
    <interactant intactId="EBI-12811565">
        <id>Q9NQX7-3</id>
        <label>ITM2C</label>
    </interactant>
    <organismsDiffer>false</organismsDiffer>
    <experiments>3</experiments>
</comment>
<comment type="interaction">
    <interactant intactId="EBI-12142257">
        <id>Q8TBE3</id>
    </interactant>
    <interactant intactId="EBI-10266796">
        <id>Q8N5M9</id>
        <label>JAGN1</label>
    </interactant>
    <organismsDiffer>false</organismsDiffer>
    <experiments>3</experiments>
</comment>
<comment type="interaction">
    <interactant intactId="EBI-12142257">
        <id>Q8TBE3</id>
    </interactant>
    <interactant intactId="EBI-12383540">
        <id>Q53RY4</id>
        <label>KRTCAP3</label>
    </interactant>
    <organismsDiffer>false</organismsDiffer>
    <experiments>3</experiments>
</comment>
<comment type="interaction">
    <interactant intactId="EBI-12142257">
        <id>Q8TBE3</id>
    </interactant>
    <interactant intactId="EBI-2820517">
        <id>Q8TAF8</id>
        <label>LHFPL5</label>
    </interactant>
    <organismsDiffer>false</organismsDiffer>
    <experiments>3</experiments>
</comment>
<comment type="interaction">
    <interactant intactId="EBI-12142257">
        <id>Q8TBE3</id>
    </interactant>
    <interactant intactId="EBI-12033434">
        <id>Q9UBY5</id>
        <label>LPAR3</label>
    </interactant>
    <organismsDiffer>false</organismsDiffer>
    <experiments>3</experiments>
</comment>
<comment type="interaction">
    <interactant intactId="EBI-12142257">
        <id>Q8TBE3</id>
    </interactant>
    <interactant intactId="EBI-3932027">
        <id>P21145</id>
        <label>MAL</label>
    </interactant>
    <organismsDiffer>false</organismsDiffer>
    <experiments>3</experiments>
</comment>
<comment type="interaction">
    <interactant intactId="EBI-12142257">
        <id>Q8TBE3</id>
    </interactant>
    <interactant intactId="EBI-750078">
        <id>Q13021</id>
        <label>MALL</label>
    </interactant>
    <organismsDiffer>false</organismsDiffer>
    <experiments>3</experiments>
</comment>
<comment type="interaction">
    <interactant intactId="EBI-12142257">
        <id>Q8TBE3</id>
    </interactant>
    <interactant intactId="EBI-12179105">
        <id>O75425</id>
        <label>MOSPD3</label>
    </interactant>
    <organismsDiffer>false</organismsDiffer>
    <experiments>3</experiments>
</comment>
<comment type="interaction">
    <interactant intactId="EBI-12142257">
        <id>Q8TBE3</id>
    </interactant>
    <interactant intactId="EBI-13301517">
        <id>Q96S97</id>
        <label>MYADM</label>
    </interactant>
    <organismsDiffer>false</organismsDiffer>
    <experiments>3</experiments>
</comment>
<comment type="interaction">
    <interactant intactId="EBI-12142257">
        <id>Q8TBE3</id>
    </interactant>
    <interactant intactId="EBI-2802124">
        <id>Q92982</id>
        <label>NINJ1</label>
    </interactant>
    <organismsDiffer>false</organismsDiffer>
    <experiments>3</experiments>
</comment>
<comment type="interaction">
    <interactant intactId="EBI-12142257">
        <id>Q8TBE3</id>
    </interactant>
    <interactant intactId="EBI-10317425">
        <id>Q9NZG7</id>
        <label>NINJ2</label>
    </interactant>
    <organismsDiffer>false</organismsDiffer>
    <experiments>3</experiments>
</comment>
<comment type="interaction">
    <interactant intactId="EBI-12142257">
        <id>Q8TBE3</id>
    </interactant>
    <interactant intactId="EBI-3919611">
        <id>Q16617</id>
        <label>NKG7</label>
    </interactant>
    <organismsDiffer>false</organismsDiffer>
    <experiments>3</experiments>
</comment>
<comment type="interaction">
    <interactant intactId="EBI-12142257">
        <id>Q8TBE3</id>
    </interactant>
    <interactant intactId="EBI-6380741">
        <id>P42857</id>
        <label>NSG1</label>
    </interactant>
    <organismsDiffer>false</organismsDiffer>
    <experiments>3</experiments>
</comment>
<comment type="interaction">
    <interactant intactId="EBI-12142257">
        <id>Q8TBE3</id>
    </interactant>
    <interactant intactId="EBI-2804156">
        <id>Q6UX06</id>
        <label>OLFM4</label>
    </interactant>
    <organismsDiffer>false</organismsDiffer>
    <experiments>3</experiments>
</comment>
<comment type="interaction">
    <interactant intactId="EBI-12142257">
        <id>Q8TBE3</id>
    </interactant>
    <interactant intactId="EBI-12957629">
        <id>P0DJD7</id>
        <label>PGA4</label>
    </interactant>
    <organismsDiffer>false</organismsDiffer>
    <experiments>3</experiments>
</comment>
<comment type="interaction">
    <interactant intactId="EBI-12142257">
        <id>Q8TBE3</id>
    </interactant>
    <interactant intactId="EBI-12092917">
        <id>Q9UHJ9-5</id>
        <label>PGAP2</label>
    </interactant>
    <organismsDiffer>false</organismsDiffer>
    <experiments>3</experiments>
</comment>
<comment type="interaction">
    <interactant intactId="EBI-12142257">
        <id>Q8TBE3</id>
    </interactant>
    <interactant intactId="EBI-3919291">
        <id>Q9Y342</id>
        <label>PLLP</label>
    </interactant>
    <organismsDiffer>false</organismsDiffer>
    <experiments>3</experiments>
</comment>
<comment type="interaction">
    <interactant intactId="EBI-12142257">
        <id>Q8TBE3</id>
    </interactant>
    <interactant intactId="EBI-692836">
        <id>P26678</id>
        <label>PLN</label>
    </interactant>
    <organismsDiffer>false</organismsDiffer>
    <experiments>3</experiments>
</comment>
<comment type="interaction">
    <interactant intactId="EBI-12142257">
        <id>Q8TBE3</id>
    </interactant>
    <interactant intactId="EBI-12188331">
        <id>P60201-2</id>
        <label>PLP1</label>
    </interactant>
    <organismsDiffer>false</organismsDiffer>
    <experiments>3</experiments>
</comment>
<comment type="interaction">
    <interactant intactId="EBI-12142257">
        <id>Q8TBE3</id>
    </interactant>
    <interactant intactId="EBI-608347">
        <id>Q04941</id>
        <label>PLP2</label>
    </interactant>
    <organismsDiffer>false</organismsDiffer>
    <experiments>3</experiments>
</comment>
<comment type="interaction">
    <interactant intactId="EBI-12142257">
        <id>Q8TBE3</id>
    </interactant>
    <interactant intactId="EBI-11721828">
        <id>Q8IY26</id>
        <label>PLPP6</label>
    </interactant>
    <organismsDiffer>false</organismsDiffer>
    <experiments>3</experiments>
</comment>
<comment type="interaction">
    <interactant intactId="EBI-12142257">
        <id>Q8TBE3</id>
    </interactant>
    <interactant intactId="EBI-14210385">
        <id>Q59EV6</id>
        <label>PPGB</label>
    </interactant>
    <organismsDiffer>false</organismsDiffer>
    <experiments>3</experiments>
</comment>
<comment type="interaction">
    <interactant intactId="EBI-12142257">
        <id>Q8TBE3</id>
    </interactant>
    <interactant intactId="EBI-12902928">
        <id>Q8NFJ6</id>
        <label>PROKR2</label>
    </interactant>
    <organismsDiffer>false</organismsDiffer>
    <experiments>3</experiments>
</comment>
<comment type="interaction">
    <interactant intactId="EBI-12142257">
        <id>Q8TBE3</id>
    </interactant>
    <interactant intactId="EBI-1052363">
        <id>Q9NS64</id>
        <label>RPRM</label>
    </interactant>
    <organismsDiffer>false</organismsDiffer>
    <experiments>3</experiments>
</comment>
<comment type="interaction">
    <interactant intactId="EBI-12142257">
        <id>Q8TBE3</id>
    </interactant>
    <interactant intactId="EBI-1058865">
        <id>O75396</id>
        <label>SEC22B</label>
    </interactant>
    <organismsDiffer>false</organismsDiffer>
    <experiments>3</experiments>
</comment>
<comment type="interaction">
    <interactant intactId="EBI-12142257">
        <id>Q8TBE3</id>
    </interactant>
    <interactant intactId="EBI-749270">
        <id>Q8N6R1</id>
        <label>SERP2</label>
    </interactant>
    <organismsDiffer>false</organismsDiffer>
    <experiments>3</experiments>
</comment>
<comment type="interaction">
    <interactant intactId="EBI-12142257">
        <id>Q8TBE3</id>
    </interactant>
    <interactant intactId="EBI-10197617">
        <id>P11686</id>
        <label>SFTPC</label>
    </interactant>
    <organismsDiffer>false</organismsDiffer>
    <experiments>3</experiments>
</comment>
<comment type="interaction">
    <interactant intactId="EBI-12142257">
        <id>Q8TBE3</id>
    </interactant>
    <interactant intactId="EBI-10262251">
        <id>Q8IWU4</id>
        <label>SLC30A8</label>
    </interactant>
    <organismsDiffer>false</organismsDiffer>
    <experiments>3</experiments>
</comment>
<comment type="interaction">
    <interactant intactId="EBI-12142257">
        <id>Q8TBE3</id>
    </interactant>
    <interactant intactId="EBI-12870360">
        <id>P78382</id>
        <label>SLC35A1</label>
    </interactant>
    <organismsDiffer>false</organismsDiffer>
    <experiments>3</experiments>
</comment>
<comment type="interaction">
    <interactant intactId="EBI-12142257">
        <id>Q8TBE3</id>
    </interactant>
    <interactant intactId="EBI-10290130">
        <id>Q96JW4</id>
        <label>SLC41A2</label>
    </interactant>
    <organismsDiffer>false</organismsDiffer>
    <experiments>3</experiments>
</comment>
<comment type="interaction">
    <interactant intactId="EBI-12142257">
        <id>Q8TBE3</id>
    </interactant>
    <interactant intactId="EBI-12188413">
        <id>B2RUZ4</id>
        <label>SMIM1</label>
    </interactant>
    <organismsDiffer>false</organismsDiffer>
    <experiments>3</experiments>
</comment>
<comment type="interaction">
    <interactant intactId="EBI-12142257">
        <id>Q8TBE3</id>
    </interactant>
    <interactant intactId="EBI-741850">
        <id>Q9BZL3</id>
        <label>SMIM3</label>
    </interactant>
    <organismsDiffer>false</organismsDiffer>
    <experiments>3</experiments>
</comment>
<comment type="interaction">
    <interactant intactId="EBI-12142257">
        <id>Q8TBE3</id>
    </interactant>
    <interactant intactId="EBI-12908338">
        <id>Q96JF0-2</id>
        <label>ST6GAL2</label>
    </interactant>
    <organismsDiffer>false</organismsDiffer>
    <experiments>3</experiments>
</comment>
<comment type="interaction">
    <interactant intactId="EBI-12142257">
        <id>Q8TBE3</id>
    </interactant>
    <interactant intactId="EBI-727240">
        <id>Q9UNK0</id>
        <label>STX8</label>
    </interactant>
    <organismsDiffer>false</organismsDiffer>
    <experiments>3</experiments>
</comment>
<comment type="interaction">
    <interactant intactId="EBI-12142257">
        <id>Q8TBE3</id>
    </interactant>
    <interactant intactId="EBI-8644968">
        <id>Q9NV29</id>
        <label>TMEM100</label>
    </interactant>
    <organismsDiffer>false</organismsDiffer>
    <experiments>3</experiments>
</comment>
<comment type="interaction">
    <interactant intactId="EBI-12142257">
        <id>Q8TBE3</id>
    </interactant>
    <interactant intactId="EBI-2844246">
        <id>Q9NV12</id>
        <label>TMEM140</label>
    </interactant>
    <organismsDiffer>false</organismsDiffer>
    <experiments>3</experiments>
</comment>
<comment type="interaction">
    <interactant intactId="EBI-12142257">
        <id>Q8TBE3</id>
    </interactant>
    <interactant intactId="EBI-10255122">
        <id>Q6ZP80</id>
        <label>TMEM182</label>
    </interactant>
    <organismsDiffer>false</organismsDiffer>
    <experiments>3</experiments>
</comment>
<comment type="interaction">
    <interactant intactId="EBI-12142257">
        <id>Q8TBE3</id>
    </interactant>
    <interactant intactId="EBI-11956809">
        <id>Q8TBM7</id>
        <label>TMEM254</label>
    </interactant>
    <organismsDiffer>false</organismsDiffer>
    <experiments>3</experiments>
</comment>
<comment type="interaction">
    <interactant intactId="EBI-12142257">
        <id>Q8TBE3</id>
    </interactant>
    <interactant intactId="EBI-2852148">
        <id>Q9H2L4</id>
        <label>TMEM60</label>
    </interactant>
    <organismsDiffer>false</organismsDiffer>
    <experiments>3</experiments>
</comment>
<comment type="interaction">
    <interactant intactId="EBI-12142257">
        <id>Q8TBE3</id>
    </interactant>
    <interactant intactId="EBI-8649725">
        <id>Q9BSE2</id>
        <label>TMEM79</label>
    </interactant>
    <organismsDiffer>false</organismsDiffer>
    <experiments>3</experiments>
</comment>
<comment type="interaction">
    <interactant intactId="EBI-12142257">
        <id>Q8TBE3</id>
    </interactant>
    <interactant intactId="EBI-12015604">
        <id>Q8N2M4</id>
        <label>TMEM86A</label>
    </interactant>
    <organismsDiffer>false</organismsDiffer>
    <experiments>3</experiments>
</comment>
<comment type="interaction">
    <interactant intactId="EBI-12142257">
        <id>Q8TBE3</id>
    </interactant>
    <interactant intactId="EBI-10313040">
        <id>Q9NRS4</id>
        <label>TMPRSS4</label>
    </interactant>
    <organismsDiffer>false</organismsDiffer>
    <experiments>3</experiments>
</comment>
<comment type="interaction">
    <interactant intactId="EBI-12142257">
        <id>Q8TBE3</id>
    </interactant>
    <interactant intactId="EBI-359977">
        <id>P01375</id>
        <label>TNF</label>
    </interactant>
    <organismsDiffer>false</organismsDiffer>
    <experiments>3</experiments>
</comment>
<comment type="interaction">
    <interactant intactId="EBI-12142257">
        <id>Q8TBE3</id>
    </interactant>
    <interactant intactId="EBI-16746122">
        <id>Q9NSU2-1</id>
        <label>TREX1</label>
    </interactant>
    <organismsDiffer>false</organismsDiffer>
    <experiments>3</experiments>
</comment>
<comment type="interaction">
    <interactant intactId="EBI-12142257">
        <id>Q8TBE3</id>
    </interactant>
    <interactant intactId="EBI-12195249">
        <id>Q5TGU0</id>
        <label>TSPO2</label>
    </interactant>
    <organismsDiffer>false</organismsDiffer>
    <experiments>3</experiments>
</comment>
<comment type="interaction">
    <interactant intactId="EBI-12142257">
        <id>Q8TBE3</id>
    </interactant>
    <interactant intactId="EBI-10243654">
        <id>Q5BVD1</id>
        <label>TTMP</label>
    </interactant>
    <organismsDiffer>false</organismsDiffer>
    <experiments>3</experiments>
</comment>
<comment type="interaction">
    <interactant intactId="EBI-12142257">
        <id>Q8TBE3</id>
    </interactant>
    <interactant intactId="EBI-11988865">
        <id>A5PKU2</id>
        <label>TUSC5</label>
    </interactant>
    <organismsDiffer>false</organismsDiffer>
    <experiments>3</experiments>
</comment>
<comment type="interaction">
    <interactant intactId="EBI-12142257">
        <id>Q8TBE3</id>
    </interactant>
    <interactant intactId="EBI-10304067">
        <id>Q9GZX9</id>
        <label>TWSG1</label>
    </interactant>
    <organismsDiffer>false</organismsDiffer>
    <experiments>3</experiments>
</comment>
<comment type="interaction">
    <interactant intactId="EBI-12142257">
        <id>Q8TBE3</id>
    </interactant>
    <interactant intactId="EBI-2819725">
        <id>Q9Y5Z9</id>
        <label>UBIAD1</label>
    </interactant>
    <organismsDiffer>false</organismsDiffer>
    <experiments>3</experiments>
</comment>
<comment type="interaction">
    <interactant intactId="EBI-12142257">
        <id>Q8TBE3</id>
    </interactant>
    <interactant intactId="EBI-12237619">
        <id>O75841</id>
        <label>UPK1B</label>
    </interactant>
    <organismsDiffer>false</organismsDiffer>
    <experiments>3</experiments>
</comment>
<comment type="interaction">
    <interactant intactId="EBI-12142257">
        <id>Q8TBE3</id>
    </interactant>
    <interactant intactId="EBI-10179682">
        <id>O00526</id>
        <label>UPK2</label>
    </interactant>
    <organismsDiffer>false</organismsDiffer>
    <experiments>3</experiments>
</comment>
<comment type="interaction">
    <interactant intactId="EBI-12142257">
        <id>Q8TBE3</id>
    </interactant>
    <interactant intactId="EBI-10191195">
        <id>O95183</id>
        <label>VAMP5</label>
    </interactant>
    <organismsDiffer>false</organismsDiffer>
    <experiments>3</experiments>
</comment>
<comment type="interaction">
    <interactant intactId="EBI-12142257">
        <id>Q8TBE3</id>
    </interactant>
    <interactant intactId="EBI-12190699">
        <id>Q6UX27-3</id>
        <label>VSTM1</label>
    </interactant>
    <organismsDiffer>false</organismsDiffer>
    <experiments>3</experiments>
</comment>
<comment type="interaction">
    <interactant intactId="EBI-12142257">
        <id>Q8TBE3</id>
    </interactant>
    <interactant intactId="EBI-10268111">
        <id>Q8N966</id>
        <label>ZDHHC22</label>
    </interactant>
    <organismsDiffer>false</organismsDiffer>
    <experiments>3</experiments>
</comment>
<comment type="interaction">
    <interactant intactId="EBI-12142257">
        <id>Q8TBE3</id>
    </interactant>
    <interactant intactId="EBI-718439">
        <id>O95159</id>
        <label>ZFPL1</label>
    </interactant>
    <organismsDiffer>false</organismsDiffer>
    <experiments>3</experiments>
</comment>
<comment type="subcellular location">
    <subcellularLocation>
        <location evidence="5">Membrane</location>
        <topology evidence="5">Single-pass membrane protein</topology>
    </subcellularLocation>
</comment>
<comment type="caution">
    <text evidence="5">Encoded in intron of the gene CYFIP2 (opposite strand).</text>
</comment>
<organism>
    <name type="scientific">Homo sapiens</name>
    <name type="common">Human</name>
    <dbReference type="NCBI Taxonomy" id="9606"/>
    <lineage>
        <taxon>Eukaryota</taxon>
        <taxon>Metazoa</taxon>
        <taxon>Chordata</taxon>
        <taxon>Craniata</taxon>
        <taxon>Vertebrata</taxon>
        <taxon>Euteleostomi</taxon>
        <taxon>Mammalia</taxon>
        <taxon>Eutheria</taxon>
        <taxon>Euarchontoglires</taxon>
        <taxon>Primates</taxon>
        <taxon>Haplorrhini</taxon>
        <taxon>Catarrhini</taxon>
        <taxon>Hominidae</taxon>
        <taxon>Homo</taxon>
    </lineage>
</organism>
<dbReference type="EMBL" id="AK289701">
    <property type="protein sequence ID" value="BAF82390.1"/>
    <property type="molecule type" value="mRNA"/>
</dbReference>
<dbReference type="EMBL" id="AC016571">
    <property type="status" value="NOT_ANNOTATED_CDS"/>
    <property type="molecule type" value="Genomic_DNA"/>
</dbReference>
<dbReference type="EMBL" id="CH471062">
    <property type="protein sequence ID" value="EAW61607.1"/>
    <property type="molecule type" value="Genomic_DNA"/>
</dbReference>
<dbReference type="EMBL" id="BC022570">
    <property type="protein sequence ID" value="AAH22570.1"/>
    <property type="molecule type" value="mRNA"/>
</dbReference>
<dbReference type="CCDS" id="CCDS4337.1"/>
<dbReference type="RefSeq" id="NP_001001343.2">
    <property type="nucleotide sequence ID" value="NM_001001343.4"/>
</dbReference>
<dbReference type="SMR" id="Q8TBE3"/>
<dbReference type="BioGRID" id="135924">
    <property type="interactions" value="89"/>
</dbReference>
<dbReference type="FunCoup" id="Q8TBE3">
    <property type="interactions" value="58"/>
</dbReference>
<dbReference type="IntAct" id="Q8TBE3">
    <property type="interactions" value="93"/>
</dbReference>
<dbReference type="STRING" id="9606.ENSP00000310594"/>
<dbReference type="iPTMnet" id="Q8TBE3"/>
<dbReference type="PhosphoSitePlus" id="Q8TBE3"/>
<dbReference type="BioMuta" id="FNDC9"/>
<dbReference type="DMDM" id="212276424"/>
<dbReference type="MassIVE" id="Q8TBE3"/>
<dbReference type="PaxDb" id="9606-ENSP00000310594"/>
<dbReference type="PeptideAtlas" id="Q8TBE3"/>
<dbReference type="Antibodypedia" id="2636">
    <property type="antibodies" value="34 antibodies from 13 providers"/>
</dbReference>
<dbReference type="DNASU" id="408263"/>
<dbReference type="Ensembl" id="ENST00000312349.5">
    <property type="protein sequence ID" value="ENSP00000310594.4"/>
    <property type="gene ID" value="ENSG00000172568.5"/>
</dbReference>
<dbReference type="GeneID" id="408263"/>
<dbReference type="KEGG" id="hsa:408263"/>
<dbReference type="MANE-Select" id="ENST00000312349.5">
    <property type="protein sequence ID" value="ENSP00000310594.4"/>
    <property type="RefSeq nucleotide sequence ID" value="NM_001001343.4"/>
    <property type="RefSeq protein sequence ID" value="NP_001001343.2"/>
</dbReference>
<dbReference type="UCSC" id="uc003lwu.3">
    <property type="organism name" value="human"/>
</dbReference>
<dbReference type="AGR" id="HGNC:33547"/>
<dbReference type="CTD" id="408263"/>
<dbReference type="GeneCards" id="FNDC9"/>
<dbReference type="HGNC" id="HGNC:33547">
    <property type="gene designation" value="FNDC9"/>
</dbReference>
<dbReference type="HPA" id="ENSG00000172568">
    <property type="expression patterns" value="Group enriched (brain, pituitary gland)"/>
</dbReference>
<dbReference type="neXtProt" id="NX_Q8TBE3"/>
<dbReference type="OpenTargets" id="ENSG00000172568"/>
<dbReference type="PharmGKB" id="PA162380178"/>
<dbReference type="VEuPathDB" id="HostDB:ENSG00000172568"/>
<dbReference type="eggNOG" id="ENOG502RYGM">
    <property type="taxonomic scope" value="Eukaryota"/>
</dbReference>
<dbReference type="GeneTree" id="ENSGT00390000013517"/>
<dbReference type="InParanoid" id="Q8TBE3"/>
<dbReference type="OMA" id="TVSWAMS"/>
<dbReference type="OrthoDB" id="9406011at2759"/>
<dbReference type="PAN-GO" id="Q8TBE3">
    <property type="GO annotations" value="0 GO annotations based on evolutionary models"/>
</dbReference>
<dbReference type="PhylomeDB" id="Q8TBE3"/>
<dbReference type="TreeFam" id="TF335961"/>
<dbReference type="PathwayCommons" id="Q8TBE3"/>
<dbReference type="SignaLink" id="Q8TBE3"/>
<dbReference type="BioGRID-ORCS" id="408263">
    <property type="hits" value="15 hits in 1142 CRISPR screens"/>
</dbReference>
<dbReference type="GenomeRNAi" id="408263"/>
<dbReference type="Pharos" id="Q8TBE3">
    <property type="development level" value="Tdark"/>
</dbReference>
<dbReference type="PRO" id="PR:Q8TBE3"/>
<dbReference type="Proteomes" id="UP000005640">
    <property type="component" value="Chromosome 5"/>
</dbReference>
<dbReference type="RNAct" id="Q8TBE3">
    <property type="molecule type" value="protein"/>
</dbReference>
<dbReference type="Bgee" id="ENSG00000172568">
    <property type="expression patterns" value="Expressed in nucleus accumbens and 62 other cell types or tissues"/>
</dbReference>
<dbReference type="ExpressionAtlas" id="Q8TBE3">
    <property type="expression patterns" value="baseline and differential"/>
</dbReference>
<dbReference type="GO" id="GO:0016020">
    <property type="term" value="C:membrane"/>
    <property type="evidence" value="ECO:0007669"/>
    <property type="project" value="UniProtKB-SubCell"/>
</dbReference>
<dbReference type="Gene3D" id="2.60.40.10">
    <property type="entry name" value="Immunoglobulins"/>
    <property type="match status" value="1"/>
</dbReference>
<dbReference type="InterPro" id="IPR003961">
    <property type="entry name" value="FN3_dom"/>
</dbReference>
<dbReference type="InterPro" id="IPR036116">
    <property type="entry name" value="FN3_sf"/>
</dbReference>
<dbReference type="InterPro" id="IPR013783">
    <property type="entry name" value="Ig-like_fold"/>
</dbReference>
<dbReference type="PANTHER" id="PTHR37361">
    <property type="entry name" value="FIBRONECTIN TYPE III DOMAIN-CONTAINING PROTEIN 9"/>
    <property type="match status" value="1"/>
</dbReference>
<dbReference type="PANTHER" id="PTHR37361:SF2">
    <property type="entry name" value="FIBRONECTIN TYPE III DOMAIN-CONTAINING PROTEIN 9"/>
    <property type="match status" value="1"/>
</dbReference>
<dbReference type="SUPFAM" id="SSF49265">
    <property type="entry name" value="Fibronectin type III"/>
    <property type="match status" value="1"/>
</dbReference>
<dbReference type="PROSITE" id="PS50853">
    <property type="entry name" value="FN3"/>
    <property type="match status" value="1"/>
</dbReference>
<reference key="1">
    <citation type="journal article" date="2004" name="Nat. Genet.">
        <title>Complete sequencing and characterization of 21,243 full-length human cDNAs.</title>
        <authorList>
            <person name="Ota T."/>
            <person name="Suzuki Y."/>
            <person name="Nishikawa T."/>
            <person name="Otsuki T."/>
            <person name="Sugiyama T."/>
            <person name="Irie R."/>
            <person name="Wakamatsu A."/>
            <person name="Hayashi K."/>
            <person name="Sato H."/>
            <person name="Nagai K."/>
            <person name="Kimura K."/>
            <person name="Makita H."/>
            <person name="Sekine M."/>
            <person name="Obayashi M."/>
            <person name="Nishi T."/>
            <person name="Shibahara T."/>
            <person name="Tanaka T."/>
            <person name="Ishii S."/>
            <person name="Yamamoto J."/>
            <person name="Saito K."/>
            <person name="Kawai Y."/>
            <person name="Isono Y."/>
            <person name="Nakamura Y."/>
            <person name="Nagahari K."/>
            <person name="Murakami K."/>
            <person name="Yasuda T."/>
            <person name="Iwayanagi T."/>
            <person name="Wagatsuma M."/>
            <person name="Shiratori A."/>
            <person name="Sudo H."/>
            <person name="Hosoiri T."/>
            <person name="Kaku Y."/>
            <person name="Kodaira H."/>
            <person name="Kondo H."/>
            <person name="Sugawara M."/>
            <person name="Takahashi M."/>
            <person name="Kanda K."/>
            <person name="Yokoi T."/>
            <person name="Furuya T."/>
            <person name="Kikkawa E."/>
            <person name="Omura Y."/>
            <person name="Abe K."/>
            <person name="Kamihara K."/>
            <person name="Katsuta N."/>
            <person name="Sato K."/>
            <person name="Tanikawa M."/>
            <person name="Yamazaki M."/>
            <person name="Ninomiya K."/>
            <person name="Ishibashi T."/>
            <person name="Yamashita H."/>
            <person name="Murakawa K."/>
            <person name="Fujimori K."/>
            <person name="Tanai H."/>
            <person name="Kimata M."/>
            <person name="Watanabe M."/>
            <person name="Hiraoka S."/>
            <person name="Chiba Y."/>
            <person name="Ishida S."/>
            <person name="Ono Y."/>
            <person name="Takiguchi S."/>
            <person name="Watanabe S."/>
            <person name="Yosida M."/>
            <person name="Hotuta T."/>
            <person name="Kusano J."/>
            <person name="Kanehori K."/>
            <person name="Takahashi-Fujii A."/>
            <person name="Hara H."/>
            <person name="Tanase T.-O."/>
            <person name="Nomura Y."/>
            <person name="Togiya S."/>
            <person name="Komai F."/>
            <person name="Hara R."/>
            <person name="Takeuchi K."/>
            <person name="Arita M."/>
            <person name="Imose N."/>
            <person name="Musashino K."/>
            <person name="Yuuki H."/>
            <person name="Oshima A."/>
            <person name="Sasaki N."/>
            <person name="Aotsuka S."/>
            <person name="Yoshikawa Y."/>
            <person name="Matsunawa H."/>
            <person name="Ichihara T."/>
            <person name="Shiohata N."/>
            <person name="Sano S."/>
            <person name="Moriya S."/>
            <person name="Momiyama H."/>
            <person name="Satoh N."/>
            <person name="Takami S."/>
            <person name="Terashima Y."/>
            <person name="Suzuki O."/>
            <person name="Nakagawa S."/>
            <person name="Senoh A."/>
            <person name="Mizoguchi H."/>
            <person name="Goto Y."/>
            <person name="Shimizu F."/>
            <person name="Wakebe H."/>
            <person name="Hishigaki H."/>
            <person name="Watanabe T."/>
            <person name="Sugiyama A."/>
            <person name="Takemoto M."/>
            <person name="Kawakami B."/>
            <person name="Yamazaki M."/>
            <person name="Watanabe K."/>
            <person name="Kumagai A."/>
            <person name="Itakura S."/>
            <person name="Fukuzumi Y."/>
            <person name="Fujimori Y."/>
            <person name="Komiyama M."/>
            <person name="Tashiro H."/>
            <person name="Tanigami A."/>
            <person name="Fujiwara T."/>
            <person name="Ono T."/>
            <person name="Yamada K."/>
            <person name="Fujii Y."/>
            <person name="Ozaki K."/>
            <person name="Hirao M."/>
            <person name="Ohmori Y."/>
            <person name="Kawabata A."/>
            <person name="Hikiji T."/>
            <person name="Kobatake N."/>
            <person name="Inagaki H."/>
            <person name="Ikema Y."/>
            <person name="Okamoto S."/>
            <person name="Okitani R."/>
            <person name="Kawakami T."/>
            <person name="Noguchi S."/>
            <person name="Itoh T."/>
            <person name="Shigeta K."/>
            <person name="Senba T."/>
            <person name="Matsumura K."/>
            <person name="Nakajima Y."/>
            <person name="Mizuno T."/>
            <person name="Morinaga M."/>
            <person name="Sasaki M."/>
            <person name="Togashi T."/>
            <person name="Oyama M."/>
            <person name="Hata H."/>
            <person name="Watanabe M."/>
            <person name="Komatsu T."/>
            <person name="Mizushima-Sugano J."/>
            <person name="Satoh T."/>
            <person name="Shirai Y."/>
            <person name="Takahashi Y."/>
            <person name="Nakagawa K."/>
            <person name="Okumura K."/>
            <person name="Nagase T."/>
            <person name="Nomura N."/>
            <person name="Kikuchi H."/>
            <person name="Masuho Y."/>
            <person name="Yamashita R."/>
            <person name="Nakai K."/>
            <person name="Yada T."/>
            <person name="Nakamura Y."/>
            <person name="Ohara O."/>
            <person name="Isogai T."/>
            <person name="Sugano S."/>
        </authorList>
    </citation>
    <scope>NUCLEOTIDE SEQUENCE [LARGE SCALE MRNA]</scope>
    <source>
        <tissue>Brain</tissue>
    </source>
</reference>
<reference key="2">
    <citation type="journal article" date="2004" name="Nature">
        <title>The DNA sequence and comparative analysis of human chromosome 5.</title>
        <authorList>
            <person name="Schmutz J."/>
            <person name="Martin J."/>
            <person name="Terry A."/>
            <person name="Couronne O."/>
            <person name="Grimwood J."/>
            <person name="Lowry S."/>
            <person name="Gordon L.A."/>
            <person name="Scott D."/>
            <person name="Xie G."/>
            <person name="Huang W."/>
            <person name="Hellsten U."/>
            <person name="Tran-Gyamfi M."/>
            <person name="She X."/>
            <person name="Prabhakar S."/>
            <person name="Aerts A."/>
            <person name="Altherr M."/>
            <person name="Bajorek E."/>
            <person name="Black S."/>
            <person name="Branscomb E."/>
            <person name="Caoile C."/>
            <person name="Challacombe J.F."/>
            <person name="Chan Y.M."/>
            <person name="Denys M."/>
            <person name="Detter J.C."/>
            <person name="Escobar J."/>
            <person name="Flowers D."/>
            <person name="Fotopulos D."/>
            <person name="Glavina T."/>
            <person name="Gomez M."/>
            <person name="Gonzales E."/>
            <person name="Goodstein D."/>
            <person name="Grigoriev I."/>
            <person name="Groza M."/>
            <person name="Hammon N."/>
            <person name="Hawkins T."/>
            <person name="Haydu L."/>
            <person name="Israni S."/>
            <person name="Jett J."/>
            <person name="Kadner K."/>
            <person name="Kimball H."/>
            <person name="Kobayashi A."/>
            <person name="Lopez F."/>
            <person name="Lou Y."/>
            <person name="Martinez D."/>
            <person name="Medina C."/>
            <person name="Morgan J."/>
            <person name="Nandkeshwar R."/>
            <person name="Noonan J.P."/>
            <person name="Pitluck S."/>
            <person name="Pollard M."/>
            <person name="Predki P."/>
            <person name="Priest J."/>
            <person name="Ramirez L."/>
            <person name="Retterer J."/>
            <person name="Rodriguez A."/>
            <person name="Rogers S."/>
            <person name="Salamov A."/>
            <person name="Salazar A."/>
            <person name="Thayer N."/>
            <person name="Tice H."/>
            <person name="Tsai M."/>
            <person name="Ustaszewska A."/>
            <person name="Vo N."/>
            <person name="Wheeler J."/>
            <person name="Wu K."/>
            <person name="Yang J."/>
            <person name="Dickson M."/>
            <person name="Cheng J.-F."/>
            <person name="Eichler E.E."/>
            <person name="Olsen A."/>
            <person name="Pennacchio L.A."/>
            <person name="Rokhsar D.S."/>
            <person name="Richardson P."/>
            <person name="Lucas S.M."/>
            <person name="Myers R.M."/>
            <person name="Rubin E.M."/>
        </authorList>
    </citation>
    <scope>NUCLEOTIDE SEQUENCE [LARGE SCALE GENOMIC DNA]</scope>
</reference>
<reference key="3">
    <citation type="submission" date="2005-07" db="EMBL/GenBank/DDBJ databases">
        <authorList>
            <person name="Mural R.J."/>
            <person name="Istrail S."/>
            <person name="Sutton G.G."/>
            <person name="Florea L."/>
            <person name="Halpern A.L."/>
            <person name="Mobarry C.M."/>
            <person name="Lippert R."/>
            <person name="Walenz B."/>
            <person name="Shatkay H."/>
            <person name="Dew I."/>
            <person name="Miller J.R."/>
            <person name="Flanigan M.J."/>
            <person name="Edwards N.J."/>
            <person name="Bolanos R."/>
            <person name="Fasulo D."/>
            <person name="Halldorsson B.V."/>
            <person name="Hannenhalli S."/>
            <person name="Turner R."/>
            <person name="Yooseph S."/>
            <person name="Lu F."/>
            <person name="Nusskern D.R."/>
            <person name="Shue B.C."/>
            <person name="Zheng X.H."/>
            <person name="Zhong F."/>
            <person name="Delcher A.L."/>
            <person name="Huson D.H."/>
            <person name="Kravitz S.A."/>
            <person name="Mouchard L."/>
            <person name="Reinert K."/>
            <person name="Remington K.A."/>
            <person name="Clark A.G."/>
            <person name="Waterman M.S."/>
            <person name="Eichler E.E."/>
            <person name="Adams M.D."/>
            <person name="Hunkapiller M.W."/>
            <person name="Myers E.W."/>
            <person name="Venter J.C."/>
        </authorList>
    </citation>
    <scope>NUCLEOTIDE SEQUENCE [LARGE SCALE GENOMIC DNA]</scope>
</reference>
<reference key="4">
    <citation type="journal article" date="2004" name="Genome Res.">
        <title>The status, quality, and expansion of the NIH full-length cDNA project: the Mammalian Gene Collection (MGC).</title>
        <authorList>
            <consortium name="The MGC Project Team"/>
        </authorList>
    </citation>
    <scope>NUCLEOTIDE SEQUENCE [LARGE SCALE MRNA]</scope>
    <scope>VARIANT ASN-50</scope>
    <source>
        <tissue>Brain</tissue>
    </source>
</reference>
<gene>
    <name type="primary">FNDC9</name>
    <name type="synonym">C5orf40</name>
</gene>
<accession>Q8TBE3</accession>
<accession>A8K0Y6</accession>
<name>FNDC9_HUMAN</name>